<protein>
    <recommendedName>
        <fullName>Probable septum site-determining protein MinC</fullName>
    </recommendedName>
</protein>
<dbReference type="EMBL" id="AE000657">
    <property type="protein sequence ID" value="AAC06995.1"/>
    <property type="molecule type" value="Genomic_DNA"/>
</dbReference>
<dbReference type="PIR" id="G70375">
    <property type="entry name" value="G70375"/>
</dbReference>
<dbReference type="RefSeq" id="NP_213596.1">
    <property type="nucleotide sequence ID" value="NC_000918.1"/>
</dbReference>
<dbReference type="RefSeq" id="WP_010880534.1">
    <property type="nucleotide sequence ID" value="NC_000918.1"/>
</dbReference>
<dbReference type="PDB" id="4V02">
    <property type="method" value="X-ray"/>
    <property type="resolution" value="2.70 A"/>
    <property type="chains" value="C/D=82-201"/>
</dbReference>
<dbReference type="PDBsum" id="4V02"/>
<dbReference type="SMR" id="O67034"/>
<dbReference type="STRING" id="224324.aq_878"/>
<dbReference type="EnsemblBacteria" id="AAC06995">
    <property type="protein sequence ID" value="AAC06995"/>
    <property type="gene ID" value="aq_878"/>
</dbReference>
<dbReference type="KEGG" id="aae:aq_878"/>
<dbReference type="eggNOG" id="COG0850">
    <property type="taxonomic scope" value="Bacteria"/>
</dbReference>
<dbReference type="HOGENOM" id="CLU_048711_2_0_0"/>
<dbReference type="InParanoid" id="O67034"/>
<dbReference type="OrthoDB" id="9790810at2"/>
<dbReference type="EvolutionaryTrace" id="O67034"/>
<dbReference type="Proteomes" id="UP000000798">
    <property type="component" value="Chromosome"/>
</dbReference>
<dbReference type="GO" id="GO:0000902">
    <property type="term" value="P:cell morphogenesis"/>
    <property type="evidence" value="ECO:0007669"/>
    <property type="project" value="InterPro"/>
</dbReference>
<dbReference type="GO" id="GO:0000917">
    <property type="term" value="P:division septum assembly"/>
    <property type="evidence" value="ECO:0007669"/>
    <property type="project" value="UniProtKB-KW"/>
</dbReference>
<dbReference type="GO" id="GO:0051302">
    <property type="term" value="P:regulation of cell division"/>
    <property type="evidence" value="ECO:0007669"/>
    <property type="project" value="InterPro"/>
</dbReference>
<dbReference type="GO" id="GO:1901891">
    <property type="term" value="P:regulation of cell septum assembly"/>
    <property type="evidence" value="ECO:0007669"/>
    <property type="project" value="InterPro"/>
</dbReference>
<dbReference type="Gene3D" id="2.160.20.70">
    <property type="match status" value="1"/>
</dbReference>
<dbReference type="HAMAP" id="MF_00267">
    <property type="entry name" value="MinC"/>
    <property type="match status" value="1"/>
</dbReference>
<dbReference type="InterPro" id="IPR016098">
    <property type="entry name" value="CAP/MinC_C"/>
</dbReference>
<dbReference type="InterPro" id="IPR013033">
    <property type="entry name" value="MinC"/>
</dbReference>
<dbReference type="InterPro" id="IPR036145">
    <property type="entry name" value="MinC_C_sf"/>
</dbReference>
<dbReference type="InterPro" id="IPR007874">
    <property type="entry name" value="MinC_N"/>
</dbReference>
<dbReference type="InterPro" id="IPR005526">
    <property type="entry name" value="Septum_form_inhib_MinC_C"/>
</dbReference>
<dbReference type="NCBIfam" id="TIGR01222">
    <property type="entry name" value="minC"/>
    <property type="match status" value="1"/>
</dbReference>
<dbReference type="PANTHER" id="PTHR34108">
    <property type="entry name" value="SEPTUM SITE-DETERMINING PROTEIN MINC"/>
    <property type="match status" value="1"/>
</dbReference>
<dbReference type="PANTHER" id="PTHR34108:SF1">
    <property type="entry name" value="SEPTUM SITE-DETERMINING PROTEIN MINC"/>
    <property type="match status" value="1"/>
</dbReference>
<dbReference type="Pfam" id="PF03775">
    <property type="entry name" value="MinC_C"/>
    <property type="match status" value="1"/>
</dbReference>
<dbReference type="Pfam" id="PF05209">
    <property type="entry name" value="MinC_N"/>
    <property type="match status" value="1"/>
</dbReference>
<dbReference type="SUPFAM" id="SSF63848">
    <property type="entry name" value="Cell-division inhibitor MinC, C-terminal domain"/>
    <property type="match status" value="1"/>
</dbReference>
<keyword id="KW-0002">3D-structure</keyword>
<keyword id="KW-0131">Cell cycle</keyword>
<keyword id="KW-0132">Cell division</keyword>
<keyword id="KW-1185">Reference proteome</keyword>
<keyword id="KW-0717">Septation</keyword>
<comment type="function">
    <text evidence="1">Cell division inhibitor that blocks the formation of polar Z ring septums. Rapidly oscillates between the poles of the cell to destabilize FtsZ filaments that have formed before they mature into polar Z rings. Prevents FtsZ polymerization (By similarity).</text>
</comment>
<comment type="subunit">
    <text evidence="1">Interacts with MinD and FtsZ.</text>
</comment>
<comment type="similarity">
    <text evidence="2">Belongs to the MinC family.</text>
</comment>
<organism>
    <name type="scientific">Aquifex aeolicus (strain VF5)</name>
    <dbReference type="NCBI Taxonomy" id="224324"/>
    <lineage>
        <taxon>Bacteria</taxon>
        <taxon>Pseudomonadati</taxon>
        <taxon>Aquificota</taxon>
        <taxon>Aquificia</taxon>
        <taxon>Aquificales</taxon>
        <taxon>Aquificaceae</taxon>
        <taxon>Aquifex</taxon>
    </lineage>
</organism>
<gene>
    <name type="primary">minC</name>
    <name type="ordered locus">aq_878</name>
</gene>
<accession>O67034</accession>
<proteinExistence type="evidence at protein level"/>
<sequence length="201" mass="22519">MIEIKGKTLPVIQIKIKEKGNIDKLLKELKEKLSHNIFKGSLIILENPEVLKPEERKKVEEILKEFSRGFIEGKKEGKEKREESRLLIIERTLRAGQRIEHRGDILILGDVNKDAEVLAGGNIIVMGKLRGVAKAGLIGDHSAVIVALKMEPQLLQIGKKKAIMSEADRNSPGYPEVAKIEGEDIVLEPIEGAERWLKLLL</sequence>
<evidence type="ECO:0000250" key="1"/>
<evidence type="ECO:0000305" key="2"/>
<evidence type="ECO:0007829" key="3">
    <source>
        <dbReference type="PDB" id="4V02"/>
    </source>
</evidence>
<feature type="chain" id="PRO_0000189012" description="Probable septum site-determining protein MinC">
    <location>
        <begin position="1"/>
        <end position="201"/>
    </location>
</feature>
<feature type="strand" evidence="3">
    <location>
        <begin position="86"/>
        <end position="89"/>
    </location>
</feature>
<feature type="strand" evidence="3">
    <location>
        <begin position="98"/>
        <end position="109"/>
    </location>
</feature>
<feature type="strand" evidence="3">
    <location>
        <begin position="116"/>
        <end position="121"/>
    </location>
</feature>
<feature type="strand" evidence="3">
    <location>
        <begin position="123"/>
        <end position="129"/>
    </location>
</feature>
<feature type="strand" evidence="3">
    <location>
        <begin position="131"/>
        <end position="135"/>
    </location>
</feature>
<feature type="strand" evidence="3">
    <location>
        <begin position="145"/>
        <end position="150"/>
    </location>
</feature>
<feature type="strand" evidence="3">
    <location>
        <begin position="153"/>
        <end position="157"/>
    </location>
</feature>
<feature type="strand" evidence="3">
    <location>
        <begin position="160"/>
        <end position="163"/>
    </location>
</feature>
<feature type="strand" evidence="3">
    <location>
        <begin position="176"/>
        <end position="181"/>
    </location>
</feature>
<feature type="strand" evidence="3">
    <location>
        <begin position="184"/>
        <end position="189"/>
    </location>
</feature>
<feature type="helix" evidence="3">
    <location>
        <begin position="193"/>
        <end position="201"/>
    </location>
</feature>
<reference key="1">
    <citation type="journal article" date="1998" name="Nature">
        <title>The complete genome of the hyperthermophilic bacterium Aquifex aeolicus.</title>
        <authorList>
            <person name="Deckert G."/>
            <person name="Warren P.V."/>
            <person name="Gaasterland T."/>
            <person name="Young W.G."/>
            <person name="Lenox A.L."/>
            <person name="Graham D.E."/>
            <person name="Overbeek R."/>
            <person name="Snead M.A."/>
            <person name="Keller M."/>
            <person name="Aujay M."/>
            <person name="Huber R."/>
            <person name="Feldman R.A."/>
            <person name="Short J.M."/>
            <person name="Olsen G.J."/>
            <person name="Swanson R.V."/>
        </authorList>
    </citation>
    <scope>NUCLEOTIDE SEQUENCE [LARGE SCALE GENOMIC DNA]</scope>
    <source>
        <strain>VF5</strain>
    </source>
</reference>
<name>MINC_AQUAE</name>